<feature type="chain" id="PRO_0000318845" description="Probable cytochrome P450 556A1">
    <location>
        <begin position="1"/>
        <end position="657"/>
    </location>
</feature>
<feature type="transmembrane region" description="Helical" evidence="2">
    <location>
        <begin position="2"/>
        <end position="24"/>
    </location>
</feature>
<feature type="region of interest" description="Disordered" evidence="3">
    <location>
        <begin position="440"/>
        <end position="486"/>
    </location>
</feature>
<feature type="compositionally biased region" description="Low complexity" evidence="3">
    <location>
        <begin position="446"/>
        <end position="486"/>
    </location>
</feature>
<feature type="binding site" description="axial binding residue" evidence="1">
    <location>
        <position position="587"/>
    </location>
    <ligand>
        <name>heme</name>
        <dbReference type="ChEBI" id="CHEBI:30413"/>
    </ligand>
    <ligandPart>
        <name>Fe</name>
        <dbReference type="ChEBI" id="CHEBI:18248"/>
    </ligandPart>
</feature>
<organism>
    <name type="scientific">Dictyostelium discoideum</name>
    <name type="common">Social amoeba</name>
    <dbReference type="NCBI Taxonomy" id="44689"/>
    <lineage>
        <taxon>Eukaryota</taxon>
        <taxon>Amoebozoa</taxon>
        <taxon>Evosea</taxon>
        <taxon>Eumycetozoa</taxon>
        <taxon>Dictyostelia</taxon>
        <taxon>Dictyosteliales</taxon>
        <taxon>Dictyosteliaceae</taxon>
        <taxon>Dictyostelium</taxon>
    </lineage>
</organism>
<sequence>MFLTSILYTIIIILIFYKGLEYLIEKRSFPLVHPIKGVMNGTKPYFIFGDLPFQRLLNLKPKLKELGSIYFRWFFWYPIVEIKDINAIQYVYNEKSNNYSLYWNLNKSSNFILTGSEIKRFFRIYYCAFNCKDSLQRIMPVIKSQVFDFIHSHKFQNSTLSTNDDVTNFMLKLLSRVYLGSSDEAYHCFKANYKKFNKSYLDFFHYLFPTLLKIPSKFSRKYIKNKNKRALYQVLAMKAYYGVVKQSSDDHIEESMINIIAETSYNDKEGLSLEEIKMPSYLLNASSIKGPMIMVENLMFQLIEKSEIESKIRKEIKLVFEKNGKDVNSFDFDDIMEMKYLEATLDEINRLYPPFPKLMPRQTKESDRILGYHIPKGTMISCPVADILRDPSNFQDPLTFKPERQLIFSNPKFASPSITSIQEINGLSSSSSNSFALHHRSLPSINNNNNNNNNNNNNNNNNNNNNNNNNSNNNSINGNNKNNNRNCIQSFNNSALKKSFLSDSSSIIDNIVGTNRVDKLKLDSLNENSNINNNNNKDLLNVPNIIEINKNNPISNNKYNSYNNLTIEERNQRIIKNLPWGIGSKKCLGKELAKLIVKTIIVILYSQYTFDKHLDENDEELCDTNNQPKIQITFNPEIKPPLLLKSRKLFSISQPKQ</sequence>
<gene>
    <name type="primary">cyp556A1</name>
    <name type="ORF">DDB_G0284345</name>
</gene>
<reference key="1">
    <citation type="journal article" date="2005" name="Nature">
        <title>The genome of the social amoeba Dictyostelium discoideum.</title>
        <authorList>
            <person name="Eichinger L."/>
            <person name="Pachebat J.A."/>
            <person name="Gloeckner G."/>
            <person name="Rajandream M.A."/>
            <person name="Sucgang R."/>
            <person name="Berriman M."/>
            <person name="Song J."/>
            <person name="Olsen R."/>
            <person name="Szafranski K."/>
            <person name="Xu Q."/>
            <person name="Tunggal B."/>
            <person name="Kummerfeld S."/>
            <person name="Madera M."/>
            <person name="Konfortov B.A."/>
            <person name="Rivero F."/>
            <person name="Bankier A.T."/>
            <person name="Lehmann R."/>
            <person name="Hamlin N."/>
            <person name="Davies R."/>
            <person name="Gaudet P."/>
            <person name="Fey P."/>
            <person name="Pilcher K."/>
            <person name="Chen G."/>
            <person name="Saunders D."/>
            <person name="Sodergren E.J."/>
            <person name="Davis P."/>
            <person name="Kerhornou A."/>
            <person name="Nie X."/>
            <person name="Hall N."/>
            <person name="Anjard C."/>
            <person name="Hemphill L."/>
            <person name="Bason N."/>
            <person name="Farbrother P."/>
            <person name="Desany B."/>
            <person name="Just E."/>
            <person name="Morio T."/>
            <person name="Rost R."/>
            <person name="Churcher C.M."/>
            <person name="Cooper J."/>
            <person name="Haydock S."/>
            <person name="van Driessche N."/>
            <person name="Cronin A."/>
            <person name="Goodhead I."/>
            <person name="Muzny D.M."/>
            <person name="Mourier T."/>
            <person name="Pain A."/>
            <person name="Lu M."/>
            <person name="Harper D."/>
            <person name="Lindsay R."/>
            <person name="Hauser H."/>
            <person name="James K.D."/>
            <person name="Quiles M."/>
            <person name="Madan Babu M."/>
            <person name="Saito T."/>
            <person name="Buchrieser C."/>
            <person name="Wardroper A."/>
            <person name="Felder M."/>
            <person name="Thangavelu M."/>
            <person name="Johnson D."/>
            <person name="Knights A."/>
            <person name="Loulseged H."/>
            <person name="Mungall K.L."/>
            <person name="Oliver K."/>
            <person name="Price C."/>
            <person name="Quail M.A."/>
            <person name="Urushihara H."/>
            <person name="Hernandez J."/>
            <person name="Rabbinowitsch E."/>
            <person name="Steffen D."/>
            <person name="Sanders M."/>
            <person name="Ma J."/>
            <person name="Kohara Y."/>
            <person name="Sharp S."/>
            <person name="Simmonds M.N."/>
            <person name="Spiegler S."/>
            <person name="Tivey A."/>
            <person name="Sugano S."/>
            <person name="White B."/>
            <person name="Walker D."/>
            <person name="Woodward J.R."/>
            <person name="Winckler T."/>
            <person name="Tanaka Y."/>
            <person name="Shaulsky G."/>
            <person name="Schleicher M."/>
            <person name="Weinstock G.M."/>
            <person name="Rosenthal A."/>
            <person name="Cox E.C."/>
            <person name="Chisholm R.L."/>
            <person name="Gibbs R.A."/>
            <person name="Loomis W.F."/>
            <person name="Platzer M."/>
            <person name="Kay R.R."/>
            <person name="Williams J.G."/>
            <person name="Dear P.H."/>
            <person name="Noegel A.A."/>
            <person name="Barrell B.G."/>
            <person name="Kuspa A."/>
        </authorList>
    </citation>
    <scope>NUCLEOTIDE SEQUENCE [LARGE SCALE GENOMIC DNA]</scope>
    <source>
        <strain>AX4</strain>
    </source>
</reference>
<dbReference type="EC" id="1.14.-.-"/>
<dbReference type="EMBL" id="AAFI02000064">
    <property type="protein sequence ID" value="EAL65221.1"/>
    <property type="molecule type" value="Genomic_DNA"/>
</dbReference>
<dbReference type="RefSeq" id="XP_638571.1">
    <property type="nucleotide sequence ID" value="XM_633479.1"/>
</dbReference>
<dbReference type="SMR" id="Q54PT3"/>
<dbReference type="STRING" id="44689.Q54PT3"/>
<dbReference type="PaxDb" id="44689-DDB0233049"/>
<dbReference type="EnsemblProtists" id="EAL65221">
    <property type="protein sequence ID" value="EAL65221"/>
    <property type="gene ID" value="DDB_G0284345"/>
</dbReference>
<dbReference type="GeneID" id="8624543"/>
<dbReference type="KEGG" id="ddi:DDB_G0284345"/>
<dbReference type="dictyBase" id="DDB_G0284345">
    <property type="gene designation" value="cyp556A1"/>
</dbReference>
<dbReference type="VEuPathDB" id="AmoebaDB:DDB_G0284345"/>
<dbReference type="eggNOG" id="KOG0156">
    <property type="taxonomic scope" value="Eukaryota"/>
</dbReference>
<dbReference type="HOGENOM" id="CLU_417648_0_0_1"/>
<dbReference type="InParanoid" id="Q54PT3"/>
<dbReference type="OMA" id="MKAYYGV"/>
<dbReference type="PhylomeDB" id="Q54PT3"/>
<dbReference type="PRO" id="PR:Q54PT3"/>
<dbReference type="Proteomes" id="UP000002195">
    <property type="component" value="Chromosome 4"/>
</dbReference>
<dbReference type="GO" id="GO:0016020">
    <property type="term" value="C:membrane"/>
    <property type="evidence" value="ECO:0007669"/>
    <property type="project" value="UniProtKB-SubCell"/>
</dbReference>
<dbReference type="GO" id="GO:0020037">
    <property type="term" value="F:heme binding"/>
    <property type="evidence" value="ECO:0007669"/>
    <property type="project" value="InterPro"/>
</dbReference>
<dbReference type="GO" id="GO:0005506">
    <property type="term" value="F:iron ion binding"/>
    <property type="evidence" value="ECO:0007669"/>
    <property type="project" value="InterPro"/>
</dbReference>
<dbReference type="GO" id="GO:0004497">
    <property type="term" value="F:monooxygenase activity"/>
    <property type="evidence" value="ECO:0007669"/>
    <property type="project" value="UniProtKB-KW"/>
</dbReference>
<dbReference type="GO" id="GO:0016705">
    <property type="term" value="F:oxidoreductase activity, acting on paired donors, with incorporation or reduction of molecular oxygen"/>
    <property type="evidence" value="ECO:0007669"/>
    <property type="project" value="InterPro"/>
</dbReference>
<dbReference type="CDD" id="cd00302">
    <property type="entry name" value="cytochrome_P450"/>
    <property type="match status" value="1"/>
</dbReference>
<dbReference type="Gene3D" id="1.10.630.10">
    <property type="entry name" value="Cytochrome P450"/>
    <property type="match status" value="1"/>
</dbReference>
<dbReference type="InterPro" id="IPR001128">
    <property type="entry name" value="Cyt_P450"/>
</dbReference>
<dbReference type="InterPro" id="IPR017972">
    <property type="entry name" value="Cyt_P450_CS"/>
</dbReference>
<dbReference type="InterPro" id="IPR002401">
    <property type="entry name" value="Cyt_P450_E_grp-I"/>
</dbReference>
<dbReference type="InterPro" id="IPR036396">
    <property type="entry name" value="Cyt_P450_sf"/>
</dbReference>
<dbReference type="InterPro" id="IPR050476">
    <property type="entry name" value="Insect_CytP450_Detox"/>
</dbReference>
<dbReference type="PANTHER" id="PTHR24292:SF54">
    <property type="entry name" value="CYP9F3-RELATED"/>
    <property type="match status" value="1"/>
</dbReference>
<dbReference type="PANTHER" id="PTHR24292">
    <property type="entry name" value="CYTOCHROME P450"/>
    <property type="match status" value="1"/>
</dbReference>
<dbReference type="Pfam" id="PF00067">
    <property type="entry name" value="p450"/>
    <property type="match status" value="1"/>
</dbReference>
<dbReference type="PRINTS" id="PR00463">
    <property type="entry name" value="EP450I"/>
</dbReference>
<dbReference type="SUPFAM" id="SSF48264">
    <property type="entry name" value="Cytochrome P450"/>
    <property type="match status" value="2"/>
</dbReference>
<dbReference type="PROSITE" id="PS00086">
    <property type="entry name" value="CYTOCHROME_P450"/>
    <property type="match status" value="1"/>
</dbReference>
<proteinExistence type="inferred from homology"/>
<keyword id="KW-0349">Heme</keyword>
<keyword id="KW-0408">Iron</keyword>
<keyword id="KW-0472">Membrane</keyword>
<keyword id="KW-0479">Metal-binding</keyword>
<keyword id="KW-0503">Monooxygenase</keyword>
<keyword id="KW-0560">Oxidoreductase</keyword>
<keyword id="KW-1185">Reference proteome</keyword>
<keyword id="KW-0812">Transmembrane</keyword>
<keyword id="KW-1133">Transmembrane helix</keyword>
<evidence type="ECO:0000250" key="1"/>
<evidence type="ECO:0000255" key="2"/>
<evidence type="ECO:0000256" key="3">
    <source>
        <dbReference type="SAM" id="MobiDB-lite"/>
    </source>
</evidence>
<evidence type="ECO:0000305" key="4"/>
<accession>Q54PT3</accession>
<protein>
    <recommendedName>
        <fullName>Probable cytochrome P450 556A1</fullName>
        <ecNumber>1.14.-.-</ecNumber>
    </recommendedName>
</protein>
<comment type="cofactor">
    <cofactor evidence="1">
        <name>heme</name>
        <dbReference type="ChEBI" id="CHEBI:30413"/>
    </cofactor>
</comment>
<comment type="subcellular location">
    <subcellularLocation>
        <location evidence="4">Membrane</location>
        <topology evidence="4">Single-pass membrane protein</topology>
    </subcellularLocation>
</comment>
<comment type="similarity">
    <text evidence="4">Belongs to the cytochrome P450 family.</text>
</comment>
<name>C556A_DICDI</name>